<name>POTA_STAAM</name>
<reference key="1">
    <citation type="journal article" date="2001" name="Lancet">
        <title>Whole genome sequencing of meticillin-resistant Staphylococcus aureus.</title>
        <authorList>
            <person name="Kuroda M."/>
            <person name="Ohta T."/>
            <person name="Uchiyama I."/>
            <person name="Baba T."/>
            <person name="Yuzawa H."/>
            <person name="Kobayashi I."/>
            <person name="Cui L."/>
            <person name="Oguchi A."/>
            <person name="Aoki K."/>
            <person name="Nagai Y."/>
            <person name="Lian J.-Q."/>
            <person name="Ito T."/>
            <person name="Kanamori M."/>
            <person name="Matsumaru H."/>
            <person name="Maruyama A."/>
            <person name="Murakami H."/>
            <person name="Hosoyama A."/>
            <person name="Mizutani-Ui Y."/>
            <person name="Takahashi N.K."/>
            <person name="Sawano T."/>
            <person name="Inoue R."/>
            <person name="Kaito C."/>
            <person name="Sekimizu K."/>
            <person name="Hirakawa H."/>
            <person name="Kuhara S."/>
            <person name="Goto S."/>
            <person name="Yabuzaki J."/>
            <person name="Kanehisa M."/>
            <person name="Yamashita A."/>
            <person name="Oshima K."/>
            <person name="Furuya K."/>
            <person name="Yoshino C."/>
            <person name="Shiba T."/>
            <person name="Hattori M."/>
            <person name="Ogasawara N."/>
            <person name="Hayashi H."/>
            <person name="Hiramatsu K."/>
        </authorList>
    </citation>
    <scope>NUCLEOTIDE SEQUENCE [LARGE SCALE GENOMIC DNA]</scope>
    <source>
        <strain>Mu50 / ATCC 700699</strain>
    </source>
</reference>
<protein>
    <recommendedName>
        <fullName evidence="1">Spermidine/putrescine import ATP-binding protein PotA</fullName>
        <ecNumber evidence="1">7.6.2.11</ecNumber>
    </recommendedName>
</protein>
<accession>Q99V03</accession>
<organism>
    <name type="scientific">Staphylococcus aureus (strain Mu50 / ATCC 700699)</name>
    <dbReference type="NCBI Taxonomy" id="158878"/>
    <lineage>
        <taxon>Bacteria</taxon>
        <taxon>Bacillati</taxon>
        <taxon>Bacillota</taxon>
        <taxon>Bacilli</taxon>
        <taxon>Bacillales</taxon>
        <taxon>Staphylococcaceae</taxon>
        <taxon>Staphylococcus</taxon>
    </lineage>
</organism>
<comment type="function">
    <text evidence="1">Part of the ABC transporter complex PotABCD involved in spermidine/putrescine import. Responsible for energy coupling to the transport system.</text>
</comment>
<comment type="catalytic activity">
    <reaction evidence="1">
        <text>ATP + H2O + polyamine-[polyamine-binding protein]Side 1 = ADP + phosphate + polyamineSide 2 + [polyamine-binding protein]Side 1.</text>
        <dbReference type="EC" id="7.6.2.11"/>
    </reaction>
</comment>
<comment type="subunit">
    <text evidence="1">The complex is composed of two ATP-binding proteins (PotA), two transmembrane proteins (PotB and PotC) and a solute-binding protein (PotD).</text>
</comment>
<comment type="subcellular location">
    <subcellularLocation>
        <location evidence="1">Cell membrane</location>
        <topology evidence="1">Peripheral membrane protein</topology>
    </subcellularLocation>
</comment>
<comment type="similarity">
    <text evidence="1">Belongs to the ABC transporter superfamily. Spermidine/putrescine importer (TC 3.A.1.11.1) family.</text>
</comment>
<gene>
    <name evidence="1" type="primary">potA</name>
    <name type="ordered locus">SAV1099</name>
</gene>
<sequence>MEPLLSLKSVSKSYDDLNILDDIDIDIESGYFYTLLGPSGCGKTTILKLIAGFEYPDSGEVIYQNKPIGNLPPNKRKVNTVFQDYALFPHLNVYDNIAFGLKLKKLSKTEIDQKVTEALKLVKLSGYEKRNINEMSGGQKQRVAIARAIVNEPEILLLDESLSALDLKLRTEMQYELRELQSRLGITFIFVTHDQEEALALSDFLFVLKDGKIQQFGTPTDIYDEPVNRFVADFIGESNIVEGRMVRDYVVNIYGQDFECVDMGIPENKKVEVVIRPEDISLIKAEEGLFKATVDSMLFRGVHYEICCIDNKGYEWVIQTTKKAEVGSEVGLYFDPEAIHIMVPGETEEEFDKRIESYEEVDNA</sequence>
<feature type="chain" id="PRO_0000092755" description="Spermidine/putrescine import ATP-binding protein PotA">
    <location>
        <begin position="1"/>
        <end position="364"/>
    </location>
</feature>
<feature type="domain" description="ABC transporter" evidence="1">
    <location>
        <begin position="5"/>
        <end position="235"/>
    </location>
</feature>
<feature type="binding site" evidence="1">
    <location>
        <begin position="37"/>
        <end position="44"/>
    </location>
    <ligand>
        <name>ATP</name>
        <dbReference type="ChEBI" id="CHEBI:30616"/>
    </ligand>
</feature>
<keyword id="KW-0067">ATP-binding</keyword>
<keyword id="KW-1003">Cell membrane</keyword>
<keyword id="KW-0472">Membrane</keyword>
<keyword id="KW-0547">Nucleotide-binding</keyword>
<keyword id="KW-1278">Translocase</keyword>
<keyword id="KW-0813">Transport</keyword>
<proteinExistence type="inferred from homology"/>
<dbReference type="EC" id="7.6.2.11" evidence="1"/>
<dbReference type="EMBL" id="BA000017">
    <property type="protein sequence ID" value="BAB57261.1"/>
    <property type="molecule type" value="Genomic_DNA"/>
</dbReference>
<dbReference type="RefSeq" id="WP_000433551.1">
    <property type="nucleotide sequence ID" value="NC_002758.2"/>
</dbReference>
<dbReference type="SMR" id="Q99V03"/>
<dbReference type="KEGG" id="sav:SAV1099"/>
<dbReference type="HOGENOM" id="CLU_000604_1_1_9"/>
<dbReference type="PhylomeDB" id="Q99V03"/>
<dbReference type="Proteomes" id="UP000002481">
    <property type="component" value="Chromosome"/>
</dbReference>
<dbReference type="GO" id="GO:0043190">
    <property type="term" value="C:ATP-binding cassette (ABC) transporter complex"/>
    <property type="evidence" value="ECO:0007669"/>
    <property type="project" value="InterPro"/>
</dbReference>
<dbReference type="GO" id="GO:0015417">
    <property type="term" value="F:ABC-type polyamine transporter activity"/>
    <property type="evidence" value="ECO:0007669"/>
    <property type="project" value="UniProtKB-EC"/>
</dbReference>
<dbReference type="GO" id="GO:0005524">
    <property type="term" value="F:ATP binding"/>
    <property type="evidence" value="ECO:0007669"/>
    <property type="project" value="UniProtKB-KW"/>
</dbReference>
<dbReference type="GO" id="GO:0016887">
    <property type="term" value="F:ATP hydrolysis activity"/>
    <property type="evidence" value="ECO:0007669"/>
    <property type="project" value="InterPro"/>
</dbReference>
<dbReference type="FunFam" id="3.40.50.300:FF:000133">
    <property type="entry name" value="Spermidine/putrescine import ATP-binding protein PotA"/>
    <property type="match status" value="1"/>
</dbReference>
<dbReference type="Gene3D" id="2.40.50.100">
    <property type="match status" value="1"/>
</dbReference>
<dbReference type="Gene3D" id="3.40.50.300">
    <property type="entry name" value="P-loop containing nucleotide triphosphate hydrolases"/>
    <property type="match status" value="1"/>
</dbReference>
<dbReference type="InterPro" id="IPR003593">
    <property type="entry name" value="AAA+_ATPase"/>
</dbReference>
<dbReference type="InterPro" id="IPR050093">
    <property type="entry name" value="ABC_SmlMolc_Importer"/>
</dbReference>
<dbReference type="InterPro" id="IPR003439">
    <property type="entry name" value="ABC_transporter-like_ATP-bd"/>
</dbReference>
<dbReference type="InterPro" id="IPR017871">
    <property type="entry name" value="ABC_transporter-like_CS"/>
</dbReference>
<dbReference type="InterPro" id="IPR008995">
    <property type="entry name" value="Mo/tungstate-bd_C_term_dom"/>
</dbReference>
<dbReference type="InterPro" id="IPR027417">
    <property type="entry name" value="P-loop_NTPase"/>
</dbReference>
<dbReference type="InterPro" id="IPR013611">
    <property type="entry name" value="Transp-assoc_OB_typ2"/>
</dbReference>
<dbReference type="PANTHER" id="PTHR42781">
    <property type="entry name" value="SPERMIDINE/PUTRESCINE IMPORT ATP-BINDING PROTEIN POTA"/>
    <property type="match status" value="1"/>
</dbReference>
<dbReference type="PANTHER" id="PTHR42781:SF4">
    <property type="entry name" value="SPERMIDINE_PUTRESCINE IMPORT ATP-BINDING PROTEIN POTA"/>
    <property type="match status" value="1"/>
</dbReference>
<dbReference type="Pfam" id="PF00005">
    <property type="entry name" value="ABC_tran"/>
    <property type="match status" value="1"/>
</dbReference>
<dbReference type="Pfam" id="PF08402">
    <property type="entry name" value="TOBE_2"/>
    <property type="match status" value="1"/>
</dbReference>
<dbReference type="SMART" id="SM00382">
    <property type="entry name" value="AAA"/>
    <property type="match status" value="1"/>
</dbReference>
<dbReference type="SUPFAM" id="SSF50331">
    <property type="entry name" value="MOP-like"/>
    <property type="match status" value="1"/>
</dbReference>
<dbReference type="SUPFAM" id="SSF52540">
    <property type="entry name" value="P-loop containing nucleoside triphosphate hydrolases"/>
    <property type="match status" value="1"/>
</dbReference>
<dbReference type="PROSITE" id="PS00211">
    <property type="entry name" value="ABC_TRANSPORTER_1"/>
    <property type="match status" value="1"/>
</dbReference>
<dbReference type="PROSITE" id="PS50893">
    <property type="entry name" value="ABC_TRANSPORTER_2"/>
    <property type="match status" value="1"/>
</dbReference>
<dbReference type="PROSITE" id="PS51305">
    <property type="entry name" value="POTA"/>
    <property type="match status" value="1"/>
</dbReference>
<evidence type="ECO:0000255" key="1">
    <source>
        <dbReference type="HAMAP-Rule" id="MF_01726"/>
    </source>
</evidence>